<reference key="1">
    <citation type="journal article" date="2001" name="Proc. Natl. Acad. Sci. U.S.A.">
        <title>Complete genomic sequence of Pasteurella multocida Pm70.</title>
        <authorList>
            <person name="May B.J."/>
            <person name="Zhang Q."/>
            <person name="Li L.L."/>
            <person name="Paustian M.L."/>
            <person name="Whittam T.S."/>
            <person name="Kapur V."/>
        </authorList>
    </citation>
    <scope>NUCLEOTIDE SEQUENCE [LARGE SCALE GENOMIC DNA]</scope>
    <source>
        <strain>Pm70</strain>
    </source>
</reference>
<keyword id="KW-0560">Oxidoreductase</keyword>
<keyword id="KW-1185">Reference proteome</keyword>
<gene>
    <name evidence="1" type="primary">msrA</name>
    <name type="ordered locus">PM0605</name>
</gene>
<accession>Q9CN40</accession>
<dbReference type="EC" id="1.8.4.11" evidence="1"/>
<dbReference type="EMBL" id="AE004439">
    <property type="protein sequence ID" value="AAK02689.1"/>
    <property type="molecule type" value="Genomic_DNA"/>
</dbReference>
<dbReference type="RefSeq" id="WP_005722174.1">
    <property type="nucleotide sequence ID" value="NC_002663.1"/>
</dbReference>
<dbReference type="SMR" id="Q9CN40"/>
<dbReference type="STRING" id="272843.PM0605"/>
<dbReference type="EnsemblBacteria" id="AAK02689">
    <property type="protein sequence ID" value="AAK02689"/>
    <property type="gene ID" value="PM0605"/>
</dbReference>
<dbReference type="GeneID" id="77208046"/>
<dbReference type="KEGG" id="pmu:PM0605"/>
<dbReference type="PATRIC" id="fig|272843.6.peg.613"/>
<dbReference type="HOGENOM" id="CLU_031040_10_2_6"/>
<dbReference type="OrthoDB" id="4174719at2"/>
<dbReference type="Proteomes" id="UP000000809">
    <property type="component" value="Chromosome"/>
</dbReference>
<dbReference type="GO" id="GO:0033744">
    <property type="term" value="F:L-methionine:thioredoxin-disulfide S-oxidoreductase activity"/>
    <property type="evidence" value="ECO:0007669"/>
    <property type="project" value="RHEA"/>
</dbReference>
<dbReference type="GO" id="GO:0008113">
    <property type="term" value="F:peptide-methionine (S)-S-oxide reductase activity"/>
    <property type="evidence" value="ECO:0007669"/>
    <property type="project" value="UniProtKB-UniRule"/>
</dbReference>
<dbReference type="GO" id="GO:0036211">
    <property type="term" value="P:protein modification process"/>
    <property type="evidence" value="ECO:0007669"/>
    <property type="project" value="UniProtKB-UniRule"/>
</dbReference>
<dbReference type="Gene3D" id="3.30.1060.10">
    <property type="entry name" value="Peptide methionine sulphoxide reductase MsrA"/>
    <property type="match status" value="1"/>
</dbReference>
<dbReference type="HAMAP" id="MF_01401">
    <property type="entry name" value="MsrA"/>
    <property type="match status" value="1"/>
</dbReference>
<dbReference type="InterPro" id="IPR002569">
    <property type="entry name" value="Met_Sox_Rdtase_MsrA_dom"/>
</dbReference>
<dbReference type="InterPro" id="IPR036509">
    <property type="entry name" value="Met_Sox_Rdtase_MsrA_sf"/>
</dbReference>
<dbReference type="NCBIfam" id="TIGR00401">
    <property type="entry name" value="msrA"/>
    <property type="match status" value="1"/>
</dbReference>
<dbReference type="PANTHER" id="PTHR43774">
    <property type="entry name" value="PEPTIDE METHIONINE SULFOXIDE REDUCTASE"/>
    <property type="match status" value="1"/>
</dbReference>
<dbReference type="PANTHER" id="PTHR43774:SF1">
    <property type="entry name" value="PEPTIDE METHIONINE SULFOXIDE REDUCTASE MSRA 2"/>
    <property type="match status" value="1"/>
</dbReference>
<dbReference type="Pfam" id="PF01625">
    <property type="entry name" value="PMSR"/>
    <property type="match status" value="1"/>
</dbReference>
<dbReference type="SUPFAM" id="SSF55068">
    <property type="entry name" value="Peptide methionine sulfoxide reductase"/>
    <property type="match status" value="1"/>
</dbReference>
<proteinExistence type="inferred from homology"/>
<protein>
    <recommendedName>
        <fullName evidence="1">Peptide methionine sulfoxide reductase MsrA</fullName>
        <shortName evidence="1">Protein-methionine-S-oxide reductase</shortName>
        <ecNumber evidence="1">1.8.4.11</ecNumber>
    </recommendedName>
    <alternativeName>
        <fullName evidence="1">Peptide-methionine (S)-S-oxide reductase</fullName>
        <shortName evidence="1">Peptide Met(O) reductase</shortName>
    </alternativeName>
</protein>
<sequence>MTQQAIFAGGCFWCVEAVFNQIKGVEKATSGYINGTTENPTYKEVCTGETGHAEAVKVEFDATVISYEKLLDIFFSIHNPTQLNHQGEDVGTQYRTGIYYLNDEQEQLANKKIAELQPHFAEKIVTEVLPAQTFYPAEDYHQGYLLQNPQNSYCNLVATPKFLKAKVKFEEIWK</sequence>
<evidence type="ECO:0000255" key="1">
    <source>
        <dbReference type="HAMAP-Rule" id="MF_01401"/>
    </source>
</evidence>
<organism>
    <name type="scientific">Pasteurella multocida (strain Pm70)</name>
    <dbReference type="NCBI Taxonomy" id="272843"/>
    <lineage>
        <taxon>Bacteria</taxon>
        <taxon>Pseudomonadati</taxon>
        <taxon>Pseudomonadota</taxon>
        <taxon>Gammaproteobacteria</taxon>
        <taxon>Pasteurellales</taxon>
        <taxon>Pasteurellaceae</taxon>
        <taxon>Pasteurella</taxon>
    </lineage>
</organism>
<name>MSRA_PASMU</name>
<feature type="chain" id="PRO_0000138563" description="Peptide methionine sulfoxide reductase MsrA">
    <location>
        <begin position="1"/>
        <end position="174"/>
    </location>
</feature>
<feature type="active site" evidence="1">
    <location>
        <position position="11"/>
    </location>
</feature>
<comment type="function">
    <text evidence="1">Has an important function as a repair enzyme for proteins that have been inactivated by oxidation. Catalyzes the reversible oxidation-reduction of methionine sulfoxide in proteins to methionine.</text>
</comment>
<comment type="catalytic activity">
    <reaction evidence="1">
        <text>L-methionyl-[protein] + [thioredoxin]-disulfide + H2O = L-methionyl-(S)-S-oxide-[protein] + [thioredoxin]-dithiol</text>
        <dbReference type="Rhea" id="RHEA:14217"/>
        <dbReference type="Rhea" id="RHEA-COMP:10698"/>
        <dbReference type="Rhea" id="RHEA-COMP:10700"/>
        <dbReference type="Rhea" id="RHEA-COMP:12313"/>
        <dbReference type="Rhea" id="RHEA-COMP:12315"/>
        <dbReference type="ChEBI" id="CHEBI:15377"/>
        <dbReference type="ChEBI" id="CHEBI:16044"/>
        <dbReference type="ChEBI" id="CHEBI:29950"/>
        <dbReference type="ChEBI" id="CHEBI:44120"/>
        <dbReference type="ChEBI" id="CHEBI:50058"/>
        <dbReference type="EC" id="1.8.4.11"/>
    </reaction>
</comment>
<comment type="catalytic activity">
    <reaction evidence="1">
        <text>[thioredoxin]-disulfide + L-methionine + H2O = L-methionine (S)-S-oxide + [thioredoxin]-dithiol</text>
        <dbReference type="Rhea" id="RHEA:19993"/>
        <dbReference type="Rhea" id="RHEA-COMP:10698"/>
        <dbReference type="Rhea" id="RHEA-COMP:10700"/>
        <dbReference type="ChEBI" id="CHEBI:15377"/>
        <dbReference type="ChEBI" id="CHEBI:29950"/>
        <dbReference type="ChEBI" id="CHEBI:50058"/>
        <dbReference type="ChEBI" id="CHEBI:57844"/>
        <dbReference type="ChEBI" id="CHEBI:58772"/>
        <dbReference type="EC" id="1.8.4.11"/>
    </reaction>
</comment>
<comment type="similarity">
    <text evidence="1">Belongs to the MsrA Met sulfoxide reductase family.</text>
</comment>